<dbReference type="EMBL" id="M35129">
    <property type="protein sequence ID" value="AAA31695.1"/>
    <property type="molecule type" value="Genomic_DNA"/>
</dbReference>
<dbReference type="EMBL" id="U30821">
    <property type="protein sequence ID" value="AAA81209.1"/>
    <property type="molecule type" value="Genomic_DNA"/>
</dbReference>
<dbReference type="PIR" id="T06866">
    <property type="entry name" value="CBKT5E"/>
</dbReference>
<dbReference type="RefSeq" id="NP_043178.1">
    <property type="nucleotide sequence ID" value="NC_001675.1"/>
</dbReference>
<dbReference type="SMR" id="P19152"/>
<dbReference type="GeneID" id="801602"/>
<dbReference type="GO" id="GO:0033115">
    <property type="term" value="C:cyanelle thylakoid membrane"/>
    <property type="evidence" value="ECO:0007669"/>
    <property type="project" value="UniProtKB-SubCell"/>
</dbReference>
<dbReference type="GO" id="GO:0009539">
    <property type="term" value="C:photosystem II reaction center"/>
    <property type="evidence" value="ECO:0007669"/>
    <property type="project" value="InterPro"/>
</dbReference>
<dbReference type="GO" id="GO:0009055">
    <property type="term" value="F:electron transfer activity"/>
    <property type="evidence" value="ECO:0007669"/>
    <property type="project" value="UniProtKB-UniRule"/>
</dbReference>
<dbReference type="GO" id="GO:0020037">
    <property type="term" value="F:heme binding"/>
    <property type="evidence" value="ECO:0007669"/>
    <property type="project" value="InterPro"/>
</dbReference>
<dbReference type="GO" id="GO:0005506">
    <property type="term" value="F:iron ion binding"/>
    <property type="evidence" value="ECO:0007669"/>
    <property type="project" value="UniProtKB-UniRule"/>
</dbReference>
<dbReference type="GO" id="GO:0009767">
    <property type="term" value="P:photosynthetic electron transport chain"/>
    <property type="evidence" value="ECO:0007669"/>
    <property type="project" value="InterPro"/>
</dbReference>
<dbReference type="Gene3D" id="1.20.5.860">
    <property type="entry name" value="Photosystem II cytochrome b559, alpha subunit"/>
    <property type="match status" value="1"/>
</dbReference>
<dbReference type="HAMAP" id="MF_00642">
    <property type="entry name" value="PSII_PsbE"/>
    <property type="match status" value="1"/>
</dbReference>
<dbReference type="InterPro" id="IPR006217">
    <property type="entry name" value="PSII_cyt_b559_asu"/>
</dbReference>
<dbReference type="InterPro" id="IPR037025">
    <property type="entry name" value="PSII_cyt_b559_asu_sf"/>
</dbReference>
<dbReference type="InterPro" id="IPR006216">
    <property type="entry name" value="PSII_cyt_b559_CS"/>
</dbReference>
<dbReference type="InterPro" id="IPR013081">
    <property type="entry name" value="PSII_cyt_b559_N"/>
</dbReference>
<dbReference type="InterPro" id="IPR013082">
    <property type="entry name" value="PSII_cytb559_asu_lum"/>
</dbReference>
<dbReference type="NCBIfam" id="TIGR01332">
    <property type="entry name" value="cyt_b559_alpha"/>
    <property type="match status" value="1"/>
</dbReference>
<dbReference type="PANTHER" id="PTHR33391">
    <property type="entry name" value="CYTOCHROME B559 SUBUNIT BETA-RELATED"/>
    <property type="match status" value="1"/>
</dbReference>
<dbReference type="PANTHER" id="PTHR33391:SF9">
    <property type="entry name" value="CYTOCHROME B559 SUBUNIT BETA-RELATED"/>
    <property type="match status" value="1"/>
</dbReference>
<dbReference type="Pfam" id="PF00283">
    <property type="entry name" value="Cytochrom_B559"/>
    <property type="match status" value="1"/>
</dbReference>
<dbReference type="Pfam" id="PF00284">
    <property type="entry name" value="Cytochrom_B559a"/>
    <property type="match status" value="1"/>
</dbReference>
<dbReference type="PIRSF" id="PIRSF000036">
    <property type="entry name" value="PsbE"/>
    <property type="match status" value="1"/>
</dbReference>
<dbReference type="SUPFAM" id="SSF161045">
    <property type="entry name" value="Cytochrome b559 subunits"/>
    <property type="match status" value="1"/>
</dbReference>
<dbReference type="PROSITE" id="PS00537">
    <property type="entry name" value="CYTOCHROME_B559"/>
    <property type="match status" value="1"/>
</dbReference>
<keyword id="KW-0194">Cyanelle</keyword>
<keyword id="KW-0249">Electron transport</keyword>
<keyword id="KW-0349">Heme</keyword>
<keyword id="KW-0408">Iron</keyword>
<keyword id="KW-0472">Membrane</keyword>
<keyword id="KW-0479">Metal-binding</keyword>
<keyword id="KW-0602">Photosynthesis</keyword>
<keyword id="KW-0604">Photosystem II</keyword>
<keyword id="KW-0934">Plastid</keyword>
<keyword id="KW-0793">Thylakoid</keyword>
<keyword id="KW-0812">Transmembrane</keyword>
<keyword id="KW-1133">Transmembrane helix</keyword>
<keyword id="KW-0813">Transport</keyword>
<accession>P19152</accession>
<organism>
    <name type="scientific">Cyanophora paradoxa</name>
    <dbReference type="NCBI Taxonomy" id="2762"/>
    <lineage>
        <taxon>Eukaryota</taxon>
        <taxon>Glaucocystophyceae</taxon>
        <taxon>Cyanophoraceae</taxon>
        <taxon>Cyanophora</taxon>
    </lineage>
</organism>
<name>PSBE_CYAPA</name>
<protein>
    <recommendedName>
        <fullName evidence="1">Cytochrome b559 subunit alpha</fullName>
    </recommendedName>
    <alternativeName>
        <fullName evidence="1">PSII reaction center subunit V</fullName>
    </alternativeName>
</protein>
<comment type="function">
    <text evidence="1">This b-type cytochrome is tightly associated with the reaction center of photosystem II (PSII). PSII is a light-driven water:plastoquinone oxidoreductase that uses light energy to abstract electrons from H(2)O, generating O(2) and a proton gradient subsequently used for ATP formation. It consists of a core antenna complex that captures photons, and an electron transfer chain that converts photonic excitation into a charge separation.</text>
</comment>
<comment type="cofactor">
    <cofactor evidence="1">
        <name>heme b</name>
        <dbReference type="ChEBI" id="CHEBI:60344"/>
    </cofactor>
    <text evidence="1">With its partner (PsbF) binds heme. PSII binds additional chlorophylls, carotenoids and specific lipids.</text>
</comment>
<comment type="subunit">
    <text evidence="1">Heterodimer of an alpha subunit and a beta subunit. PSII is composed of 1 copy each of membrane proteins PsbA, PsbB, PsbC, PsbD, PsbE, PsbF, PsbH, PsbI, PsbJ, PsbK, PsbL, PsbM, PsbT, PsbX, PsbY, PsbZ, Psb30/Ycf12, at least 3 peripheral proteins of the oxygen-evolving complex and a large number of cofactors. It forms dimeric complexes.</text>
</comment>
<comment type="subcellular location">
    <subcellularLocation>
        <location evidence="1">Plastid</location>
        <location evidence="1">Cyanelle thylakoid membrane</location>
        <topology evidence="1">Single-pass membrane protein</topology>
    </subcellularLocation>
</comment>
<comment type="similarity">
    <text evidence="1">Belongs to the PsbE/PsbF family.</text>
</comment>
<reference key="1">
    <citation type="journal article" date="1988" name="Photosyn. Res.">
        <title>Nucleotide sequence of the genes encoding cytochrome b-559 from the cyanelle genome of Cyanophora paradoxa.</title>
        <authorList>
            <person name="Cantrell A."/>
            <person name="Bryant D.A."/>
        </authorList>
    </citation>
    <scope>NUCLEOTIDE SEQUENCE [GENOMIC DNA]</scope>
    <source>
        <strain>UTEX LB 555 / Pringsheim</strain>
    </source>
</reference>
<reference key="2">
    <citation type="journal article" date="1987" name="Prog. Photosyn. Res.">
        <title>Molecular cloning and nucleotide sequences of the genes encoding cytochrome B-559 from the cyanelle genome of Cyanophora paradoxa.</title>
        <authorList>
            <person name="Cantrell A."/>
            <person name="Bryant D.A."/>
        </authorList>
    </citation>
    <scope>NUCLEOTIDE SEQUENCE [GENOMIC DNA]</scope>
    <source>
        <strain>UTEX LB 555 / Pringsheim</strain>
    </source>
</reference>
<reference key="3">
    <citation type="journal article" date="1995" name="Plant Mol. Biol. Rep.">
        <title>Nucleotide sequence of the cyanelle DNA from Cyanophora paradoxa.</title>
        <authorList>
            <person name="Stirewalt V.L."/>
            <person name="Michalowski C.B."/>
            <person name="Loeffelhardt W."/>
            <person name="Bohnert H.J."/>
            <person name="Bryant D.A."/>
        </authorList>
    </citation>
    <scope>NUCLEOTIDE SEQUENCE [LARGE SCALE GENOMIC DNA]</scope>
    <source>
        <strain>UTEX LB 555 / Pringsheim</strain>
    </source>
</reference>
<reference key="4">
    <citation type="book" date="1997" name="Eukaryotism and symbiosis">
        <title>The complete sequence of the cyanelle genome of Cyanophora paradoxa: the genetic complexity of a primitive plastid.</title>
        <editorList>
            <person name="Schenk H.E.A."/>
            <person name="Herrmann R."/>
            <person name="Jeon K.W."/>
            <person name="Mueller N.E."/>
            <person name="Schwemmler W."/>
        </editorList>
        <authorList>
            <person name="Loeffelhardt W."/>
            <person name="Stirewalt V.L."/>
            <person name="Michalowski C.B."/>
            <person name="Annarella M."/>
            <person name="Farley J.Y."/>
            <person name="Schluchter W.M."/>
            <person name="Chung S."/>
            <person name="Newmann-Spallart C."/>
            <person name="Steiner J.M."/>
            <person name="Jakowitsch J."/>
            <person name="Bohnert H.J."/>
            <person name="Bryant D.A."/>
        </authorList>
    </citation>
    <scope>NUCLEOTIDE SEQUENCE [LARGE SCALE GENOMIC DNA]</scope>
    <source>
        <strain>UTEX LB 555 / Pringsheim</strain>
    </source>
</reference>
<gene>
    <name evidence="1" type="primary">psbE</name>
</gene>
<sequence>MSGGTTGERPFSDIVTSIRYWVIHTVTIPSLFVAGWLFVSTGLAYDVFGTPRPDEYFTEERQEVPIINQRFSTN</sequence>
<feature type="chain" id="PRO_0000200308" description="Cytochrome b559 subunit alpha">
    <location>
        <begin position="1"/>
        <end position="74"/>
    </location>
</feature>
<feature type="transmembrane region" description="Helical" evidence="1">
    <location>
        <begin position="22"/>
        <end position="36"/>
    </location>
</feature>
<feature type="binding site" description="axial binding residue" evidence="1">
    <location>
        <position position="24"/>
    </location>
    <ligand>
        <name>heme</name>
        <dbReference type="ChEBI" id="CHEBI:30413"/>
        <note>ligand shared with beta subunit</note>
    </ligand>
    <ligandPart>
        <name>Fe</name>
        <dbReference type="ChEBI" id="CHEBI:18248"/>
    </ligandPart>
</feature>
<feature type="sequence conflict" description="In Ref. 1; AAA31695 and 2." evidence="2" ref="1 2">
    <original>SLF</original>
    <variation>FFI</variation>
    <location>
        <begin position="30"/>
        <end position="32"/>
    </location>
</feature>
<proteinExistence type="inferred from homology"/>
<geneLocation type="cyanelle"/>
<evidence type="ECO:0000255" key="1">
    <source>
        <dbReference type="HAMAP-Rule" id="MF_00642"/>
    </source>
</evidence>
<evidence type="ECO:0000305" key="2"/>